<feature type="chain" id="PRO_1000044406" description="Sec-independent protein translocase protein TatA">
    <location>
        <begin position="1"/>
        <end position="88"/>
    </location>
</feature>
<feature type="transmembrane region" description="Helical" evidence="1">
    <location>
        <begin position="1"/>
        <end position="21"/>
    </location>
</feature>
<feature type="region of interest" description="Disordered" evidence="2">
    <location>
        <begin position="43"/>
        <end position="88"/>
    </location>
</feature>
<feature type="compositionally biased region" description="Basic and acidic residues" evidence="2">
    <location>
        <begin position="43"/>
        <end position="52"/>
    </location>
</feature>
<feature type="compositionally biased region" description="Polar residues" evidence="2">
    <location>
        <begin position="57"/>
        <end position="71"/>
    </location>
</feature>
<reference key="1">
    <citation type="journal article" date="2007" name="Genome Res.">
        <title>Reductive evolution and niche adaptation inferred from the genome of Mycobacterium ulcerans, the causative agent of Buruli ulcer.</title>
        <authorList>
            <person name="Stinear T.P."/>
            <person name="Seemann T."/>
            <person name="Pidot S."/>
            <person name="Frigui W."/>
            <person name="Reysset G."/>
            <person name="Garnier T."/>
            <person name="Meurice G."/>
            <person name="Simon D."/>
            <person name="Bouchier C."/>
            <person name="Ma L."/>
            <person name="Tichit M."/>
            <person name="Porter J.L."/>
            <person name="Ryan J."/>
            <person name="Johnson P.D.R."/>
            <person name="Davies J.K."/>
            <person name="Jenkin G.A."/>
            <person name="Small P.L.C."/>
            <person name="Jones L.M."/>
            <person name="Tekaia F."/>
            <person name="Laval F."/>
            <person name="Daffe M."/>
            <person name="Parkhill J."/>
            <person name="Cole S.T."/>
        </authorList>
    </citation>
    <scope>NUCLEOTIDE SEQUENCE [LARGE SCALE GENOMIC DNA]</scope>
    <source>
        <strain>Agy99</strain>
    </source>
</reference>
<comment type="function">
    <text evidence="1">Part of the twin-arginine translocation (Tat) system that transports large folded proteins containing a characteristic twin-arginine motif in their signal peptide across membranes. TatA could form the protein-conducting channel of the Tat system.</text>
</comment>
<comment type="subunit">
    <text evidence="1">The Tat system comprises two distinct complexes: a TatABC complex, containing multiple copies of TatA, TatB and TatC subunits, and a separate TatA complex, containing only TatA subunits. Substrates initially bind to the TatABC complex, which probably triggers association of the separate TatA complex to form the active translocon.</text>
</comment>
<comment type="subcellular location">
    <subcellularLocation>
        <location evidence="1">Cell membrane</location>
        <topology evidence="1">Single-pass membrane protein</topology>
    </subcellularLocation>
</comment>
<comment type="similarity">
    <text evidence="1">Belongs to the TatA/E family.</text>
</comment>
<organism>
    <name type="scientific">Mycobacterium ulcerans (strain Agy99)</name>
    <dbReference type="NCBI Taxonomy" id="362242"/>
    <lineage>
        <taxon>Bacteria</taxon>
        <taxon>Bacillati</taxon>
        <taxon>Actinomycetota</taxon>
        <taxon>Actinomycetes</taxon>
        <taxon>Mycobacteriales</taxon>
        <taxon>Mycobacteriaceae</taxon>
        <taxon>Mycobacterium</taxon>
        <taxon>Mycobacterium ulcerans group</taxon>
    </lineage>
</organism>
<sequence length="88" mass="9520">MGSLSPWHWAILAVVVIVLFGAKKLPDAARSLGKSMRIFKSEMREMQSETKAEPSAIETNTANPTPVQSQRIDPAAATGQDQTEARPA</sequence>
<name>TATA_MYCUA</name>
<evidence type="ECO:0000255" key="1">
    <source>
        <dbReference type="HAMAP-Rule" id="MF_00236"/>
    </source>
</evidence>
<evidence type="ECO:0000256" key="2">
    <source>
        <dbReference type="SAM" id="MobiDB-lite"/>
    </source>
</evidence>
<proteinExistence type="inferred from homology"/>
<dbReference type="EMBL" id="CP000325">
    <property type="protein sequence ID" value="ABL04697.1"/>
    <property type="molecule type" value="Genomic_DNA"/>
</dbReference>
<dbReference type="RefSeq" id="WP_011740313.1">
    <property type="nucleotide sequence ID" value="NC_008611.1"/>
</dbReference>
<dbReference type="SMR" id="A0PQS8"/>
<dbReference type="GeneID" id="93437174"/>
<dbReference type="KEGG" id="mul:MUL_2326"/>
<dbReference type="eggNOG" id="COG1826">
    <property type="taxonomic scope" value="Bacteria"/>
</dbReference>
<dbReference type="HOGENOM" id="CLU_086034_4_2_11"/>
<dbReference type="Proteomes" id="UP000000765">
    <property type="component" value="Chromosome"/>
</dbReference>
<dbReference type="GO" id="GO:0033281">
    <property type="term" value="C:TAT protein transport complex"/>
    <property type="evidence" value="ECO:0007669"/>
    <property type="project" value="UniProtKB-UniRule"/>
</dbReference>
<dbReference type="GO" id="GO:0008320">
    <property type="term" value="F:protein transmembrane transporter activity"/>
    <property type="evidence" value="ECO:0007669"/>
    <property type="project" value="UniProtKB-UniRule"/>
</dbReference>
<dbReference type="GO" id="GO:0043953">
    <property type="term" value="P:protein transport by the Tat complex"/>
    <property type="evidence" value="ECO:0007669"/>
    <property type="project" value="UniProtKB-UniRule"/>
</dbReference>
<dbReference type="Gene3D" id="1.20.5.3310">
    <property type="match status" value="1"/>
</dbReference>
<dbReference type="HAMAP" id="MF_00236">
    <property type="entry name" value="TatA_E"/>
    <property type="match status" value="1"/>
</dbReference>
<dbReference type="InterPro" id="IPR003369">
    <property type="entry name" value="TatA/B/E"/>
</dbReference>
<dbReference type="InterPro" id="IPR006312">
    <property type="entry name" value="TatA/E"/>
</dbReference>
<dbReference type="NCBIfam" id="NF001854">
    <property type="entry name" value="PRK00575.1"/>
    <property type="match status" value="1"/>
</dbReference>
<dbReference type="NCBIfam" id="TIGR01411">
    <property type="entry name" value="tatAE"/>
    <property type="match status" value="1"/>
</dbReference>
<dbReference type="PANTHER" id="PTHR42982">
    <property type="entry name" value="SEC-INDEPENDENT PROTEIN TRANSLOCASE PROTEIN TATA"/>
    <property type="match status" value="1"/>
</dbReference>
<dbReference type="PANTHER" id="PTHR42982:SF8">
    <property type="entry name" value="SEC-INDEPENDENT PROTEIN TRANSLOCASE PROTEIN TATA"/>
    <property type="match status" value="1"/>
</dbReference>
<dbReference type="Pfam" id="PF02416">
    <property type="entry name" value="TatA_B_E"/>
    <property type="match status" value="1"/>
</dbReference>
<accession>A0PQS8</accession>
<keyword id="KW-1003">Cell membrane</keyword>
<keyword id="KW-0472">Membrane</keyword>
<keyword id="KW-0653">Protein transport</keyword>
<keyword id="KW-0811">Translocation</keyword>
<keyword id="KW-0812">Transmembrane</keyword>
<keyword id="KW-1133">Transmembrane helix</keyword>
<keyword id="KW-0813">Transport</keyword>
<protein>
    <recommendedName>
        <fullName evidence="1">Sec-independent protein translocase protein TatA</fullName>
    </recommendedName>
</protein>
<gene>
    <name evidence="1" type="primary">tatA</name>
    <name type="ordered locus">MUL_2326</name>
</gene>